<organism>
    <name type="scientific">Methylacidiphilum infernorum (isolate V4)</name>
    <name type="common">Methylokorus infernorum (strain V4)</name>
    <dbReference type="NCBI Taxonomy" id="481448"/>
    <lineage>
        <taxon>Bacteria</taxon>
        <taxon>Pseudomonadati</taxon>
        <taxon>Verrucomicrobiota</taxon>
        <taxon>Methylacidiphilae</taxon>
        <taxon>Methylacidiphilales</taxon>
        <taxon>Methylacidiphilaceae</taxon>
        <taxon>Methylacidiphilum (ex Ratnadevi et al. 2023)</taxon>
    </lineage>
</organism>
<keyword id="KW-0378">Hydrolase</keyword>
<keyword id="KW-0460">Magnesium</keyword>
<keyword id="KW-0479">Metal-binding</keyword>
<keyword id="KW-0546">Nucleotide metabolism</keyword>
<keyword id="KW-0547">Nucleotide-binding</keyword>
<comment type="function">
    <text evidence="1">Pyrophosphatase that catalyzes the hydrolysis of nucleoside triphosphates to their monophosphate derivatives, with a high preference for the non-canonical purine nucleotides XTP (xanthosine triphosphate), dITP (deoxyinosine triphosphate) and ITP. Seems to function as a house-cleaning enzyme that removes non-canonical purine nucleotides from the nucleotide pool, thus preventing their incorporation into DNA/RNA and avoiding chromosomal lesions.</text>
</comment>
<comment type="catalytic activity">
    <reaction evidence="1">
        <text>XTP + H2O = XMP + diphosphate + H(+)</text>
        <dbReference type="Rhea" id="RHEA:28610"/>
        <dbReference type="ChEBI" id="CHEBI:15377"/>
        <dbReference type="ChEBI" id="CHEBI:15378"/>
        <dbReference type="ChEBI" id="CHEBI:33019"/>
        <dbReference type="ChEBI" id="CHEBI:57464"/>
        <dbReference type="ChEBI" id="CHEBI:61314"/>
        <dbReference type="EC" id="3.6.1.66"/>
    </reaction>
</comment>
<comment type="catalytic activity">
    <reaction evidence="1">
        <text>dITP + H2O = dIMP + diphosphate + H(+)</text>
        <dbReference type="Rhea" id="RHEA:28342"/>
        <dbReference type="ChEBI" id="CHEBI:15377"/>
        <dbReference type="ChEBI" id="CHEBI:15378"/>
        <dbReference type="ChEBI" id="CHEBI:33019"/>
        <dbReference type="ChEBI" id="CHEBI:61194"/>
        <dbReference type="ChEBI" id="CHEBI:61382"/>
        <dbReference type="EC" id="3.6.1.66"/>
    </reaction>
</comment>
<comment type="catalytic activity">
    <reaction evidence="1">
        <text>ITP + H2O = IMP + diphosphate + H(+)</text>
        <dbReference type="Rhea" id="RHEA:29399"/>
        <dbReference type="ChEBI" id="CHEBI:15377"/>
        <dbReference type="ChEBI" id="CHEBI:15378"/>
        <dbReference type="ChEBI" id="CHEBI:33019"/>
        <dbReference type="ChEBI" id="CHEBI:58053"/>
        <dbReference type="ChEBI" id="CHEBI:61402"/>
        <dbReference type="EC" id="3.6.1.66"/>
    </reaction>
</comment>
<comment type="cofactor">
    <cofactor evidence="1">
        <name>Mg(2+)</name>
        <dbReference type="ChEBI" id="CHEBI:18420"/>
    </cofactor>
    <text evidence="1">Binds 1 Mg(2+) ion per subunit.</text>
</comment>
<comment type="subunit">
    <text evidence="1">Homodimer.</text>
</comment>
<comment type="similarity">
    <text evidence="1">Belongs to the HAM1 NTPase family.</text>
</comment>
<protein>
    <recommendedName>
        <fullName evidence="1">dITP/XTP pyrophosphatase</fullName>
        <ecNumber evidence="1">3.6.1.66</ecNumber>
    </recommendedName>
    <alternativeName>
        <fullName evidence="1">Non-canonical purine NTP pyrophosphatase</fullName>
    </alternativeName>
    <alternativeName>
        <fullName evidence="1">Non-standard purine NTP pyrophosphatase</fullName>
    </alternativeName>
    <alternativeName>
        <fullName evidence="1">Nucleoside-triphosphate diphosphatase</fullName>
    </alternativeName>
    <alternativeName>
        <fullName evidence="1">Nucleoside-triphosphate pyrophosphatase</fullName>
        <shortName evidence="1">NTPase</shortName>
    </alternativeName>
</protein>
<name>IXTPA_METI4</name>
<dbReference type="EC" id="3.6.1.66" evidence="1"/>
<dbReference type="EMBL" id="CP000975">
    <property type="protein sequence ID" value="ACD83172.1"/>
    <property type="molecule type" value="Genomic_DNA"/>
</dbReference>
<dbReference type="SMR" id="B3DV19"/>
<dbReference type="STRING" id="481448.Minf_1117"/>
<dbReference type="KEGG" id="min:Minf_1117"/>
<dbReference type="eggNOG" id="COG0127">
    <property type="taxonomic scope" value="Bacteria"/>
</dbReference>
<dbReference type="HOGENOM" id="CLU_082080_0_2_0"/>
<dbReference type="OrthoDB" id="9807456at2"/>
<dbReference type="Proteomes" id="UP000009149">
    <property type="component" value="Chromosome"/>
</dbReference>
<dbReference type="GO" id="GO:0005829">
    <property type="term" value="C:cytosol"/>
    <property type="evidence" value="ECO:0007669"/>
    <property type="project" value="TreeGrafter"/>
</dbReference>
<dbReference type="GO" id="GO:0035870">
    <property type="term" value="F:dITP diphosphatase activity"/>
    <property type="evidence" value="ECO:0007669"/>
    <property type="project" value="RHEA"/>
</dbReference>
<dbReference type="GO" id="GO:0036220">
    <property type="term" value="F:ITP diphosphatase activity"/>
    <property type="evidence" value="ECO:0007669"/>
    <property type="project" value="UniProtKB-EC"/>
</dbReference>
<dbReference type="GO" id="GO:0046872">
    <property type="term" value="F:metal ion binding"/>
    <property type="evidence" value="ECO:0007669"/>
    <property type="project" value="UniProtKB-KW"/>
</dbReference>
<dbReference type="GO" id="GO:0000166">
    <property type="term" value="F:nucleotide binding"/>
    <property type="evidence" value="ECO:0007669"/>
    <property type="project" value="UniProtKB-KW"/>
</dbReference>
<dbReference type="GO" id="GO:0017111">
    <property type="term" value="F:ribonucleoside triphosphate phosphatase activity"/>
    <property type="evidence" value="ECO:0007669"/>
    <property type="project" value="InterPro"/>
</dbReference>
<dbReference type="GO" id="GO:0036222">
    <property type="term" value="F:XTP diphosphatase activity"/>
    <property type="evidence" value="ECO:0007669"/>
    <property type="project" value="RHEA"/>
</dbReference>
<dbReference type="GO" id="GO:0009117">
    <property type="term" value="P:nucleotide metabolic process"/>
    <property type="evidence" value="ECO:0007669"/>
    <property type="project" value="UniProtKB-KW"/>
</dbReference>
<dbReference type="GO" id="GO:0009146">
    <property type="term" value="P:purine nucleoside triphosphate catabolic process"/>
    <property type="evidence" value="ECO:0007669"/>
    <property type="project" value="UniProtKB-UniRule"/>
</dbReference>
<dbReference type="CDD" id="cd00515">
    <property type="entry name" value="HAM1"/>
    <property type="match status" value="1"/>
</dbReference>
<dbReference type="FunFam" id="3.90.950.10:FF:000001">
    <property type="entry name" value="dITP/XTP pyrophosphatase"/>
    <property type="match status" value="1"/>
</dbReference>
<dbReference type="Gene3D" id="3.90.950.10">
    <property type="match status" value="1"/>
</dbReference>
<dbReference type="HAMAP" id="MF_01405">
    <property type="entry name" value="Non_canon_purine_NTPase"/>
    <property type="match status" value="1"/>
</dbReference>
<dbReference type="InterPro" id="IPR020922">
    <property type="entry name" value="dITP/XTP_pyrophosphatase"/>
</dbReference>
<dbReference type="InterPro" id="IPR029001">
    <property type="entry name" value="ITPase-like_fam"/>
</dbReference>
<dbReference type="InterPro" id="IPR002637">
    <property type="entry name" value="RdgB/HAM1"/>
</dbReference>
<dbReference type="NCBIfam" id="TIGR00042">
    <property type="entry name" value="RdgB/HAM1 family non-canonical purine NTP pyrophosphatase"/>
    <property type="match status" value="1"/>
</dbReference>
<dbReference type="PANTHER" id="PTHR11067:SF9">
    <property type="entry name" value="INOSINE TRIPHOSPHATE PYROPHOSPHATASE"/>
    <property type="match status" value="1"/>
</dbReference>
<dbReference type="PANTHER" id="PTHR11067">
    <property type="entry name" value="INOSINE TRIPHOSPHATE PYROPHOSPHATASE/HAM1 PROTEIN"/>
    <property type="match status" value="1"/>
</dbReference>
<dbReference type="Pfam" id="PF01725">
    <property type="entry name" value="Ham1p_like"/>
    <property type="match status" value="1"/>
</dbReference>
<dbReference type="SUPFAM" id="SSF52972">
    <property type="entry name" value="ITPase-like"/>
    <property type="match status" value="1"/>
</dbReference>
<evidence type="ECO:0000255" key="1">
    <source>
        <dbReference type="HAMAP-Rule" id="MF_01405"/>
    </source>
</evidence>
<gene>
    <name type="ordered locus">Minf_1117</name>
</gene>
<reference key="1">
    <citation type="journal article" date="2008" name="Biol. Direct">
        <title>Complete genome sequence of the extremely acidophilic methanotroph isolate V4, Methylacidiphilum infernorum, a representative of the bacterial phylum Verrucomicrobia.</title>
        <authorList>
            <person name="Hou S."/>
            <person name="Makarova K.S."/>
            <person name="Saw J.H."/>
            <person name="Senin P."/>
            <person name="Ly B.V."/>
            <person name="Zhou Z."/>
            <person name="Ren Y."/>
            <person name="Wang J."/>
            <person name="Galperin M.Y."/>
            <person name="Omelchenko M.V."/>
            <person name="Wolf Y.I."/>
            <person name="Yutin N."/>
            <person name="Koonin E.V."/>
            <person name="Stott M.B."/>
            <person name="Mountain B.W."/>
            <person name="Crowe M.A."/>
            <person name="Smirnova A.V."/>
            <person name="Dunfield P.F."/>
            <person name="Feng L."/>
            <person name="Wang L."/>
            <person name="Alam M."/>
        </authorList>
    </citation>
    <scope>NUCLEOTIDE SEQUENCE [LARGE SCALE GENOMIC DNA]</scope>
    <source>
        <strain>Isolate V4</strain>
    </source>
</reference>
<feature type="chain" id="PRO_1000145494" description="dITP/XTP pyrophosphatase">
    <location>
        <begin position="1"/>
        <end position="202"/>
    </location>
</feature>
<feature type="active site" description="Proton acceptor" evidence="1">
    <location>
        <position position="70"/>
    </location>
</feature>
<feature type="binding site" evidence="1">
    <location>
        <begin position="10"/>
        <end position="15"/>
    </location>
    <ligand>
        <name>substrate</name>
    </ligand>
</feature>
<feature type="binding site" evidence="1">
    <location>
        <position position="70"/>
    </location>
    <ligand>
        <name>Mg(2+)</name>
        <dbReference type="ChEBI" id="CHEBI:18420"/>
    </ligand>
</feature>
<feature type="binding site" evidence="1">
    <location>
        <position position="71"/>
    </location>
    <ligand>
        <name>substrate</name>
    </ligand>
</feature>
<feature type="binding site" evidence="1">
    <location>
        <begin position="153"/>
        <end position="156"/>
    </location>
    <ligand>
        <name>substrate</name>
    </ligand>
</feature>
<feature type="binding site" evidence="1">
    <location>
        <position position="176"/>
    </location>
    <ligand>
        <name>substrate</name>
    </ligand>
</feature>
<feature type="binding site" evidence="1">
    <location>
        <begin position="181"/>
        <end position="182"/>
    </location>
    <ligand>
        <name>substrate</name>
    </ligand>
</feature>
<sequence>MIMQKILLATSNRHKYLEFSRLLYPLTLEALPEDLKRLLPNETAKSYRDNAKLKGMALSEIYEGFVLADDSGLEVFSLHGEPGIFSSRYAGEGSSAQENIDKLLKNLQSKNITDRRARFVCALVLVKKKKILFETTAFCYGIIADRQKGGGGFGYDPIFIPEGYSLTMAELDEKQKDLVSHRGKACQELKAFFLENRMEGHS</sequence>
<accession>B3DV19</accession>
<proteinExistence type="inferred from homology"/>